<evidence type="ECO:0000256" key="1">
    <source>
        <dbReference type="SAM" id="MobiDB-lite"/>
    </source>
</evidence>
<evidence type="ECO:0000305" key="2"/>
<organism>
    <name type="scientific">Mus musculus</name>
    <name type="common">Mouse</name>
    <dbReference type="NCBI Taxonomy" id="10090"/>
    <lineage>
        <taxon>Eukaryota</taxon>
        <taxon>Metazoa</taxon>
        <taxon>Chordata</taxon>
        <taxon>Craniata</taxon>
        <taxon>Vertebrata</taxon>
        <taxon>Euteleostomi</taxon>
        <taxon>Mammalia</taxon>
        <taxon>Eutheria</taxon>
        <taxon>Euarchontoglires</taxon>
        <taxon>Glires</taxon>
        <taxon>Rodentia</taxon>
        <taxon>Myomorpha</taxon>
        <taxon>Muroidea</taxon>
        <taxon>Muridae</taxon>
        <taxon>Murinae</taxon>
        <taxon>Mus</taxon>
        <taxon>Mus</taxon>
    </lineage>
</organism>
<comment type="similarity">
    <text evidence="2">Belongs to the opioid growth factor receptor family.</text>
</comment>
<comment type="sequence caution" evidence="2">
    <conflict type="erroneous initiation">
        <sequence resource="EMBL-CDS" id="AAH19747"/>
    </conflict>
</comment>
<name>OGRL1_MOUSE</name>
<feature type="chain" id="PRO_0000314143" description="Opioid growth factor receptor-like protein 1">
    <location>
        <begin position="1"/>
        <end position="464"/>
    </location>
</feature>
<feature type="region of interest" description="Disordered" evidence="1">
    <location>
        <begin position="1"/>
        <end position="91"/>
    </location>
</feature>
<feature type="region of interest" description="Disordered" evidence="1">
    <location>
        <begin position="309"/>
        <end position="464"/>
    </location>
</feature>
<feature type="compositionally biased region" description="Basic and acidic residues" evidence="1">
    <location>
        <begin position="43"/>
        <end position="59"/>
    </location>
</feature>
<feature type="compositionally biased region" description="Low complexity" evidence="1">
    <location>
        <begin position="74"/>
        <end position="86"/>
    </location>
</feature>
<feature type="compositionally biased region" description="Basic and acidic residues" evidence="1">
    <location>
        <begin position="316"/>
        <end position="325"/>
    </location>
</feature>
<feature type="compositionally biased region" description="Polar residues" evidence="1">
    <location>
        <begin position="327"/>
        <end position="342"/>
    </location>
</feature>
<feature type="compositionally biased region" description="Basic and acidic residues" evidence="1">
    <location>
        <begin position="363"/>
        <end position="382"/>
    </location>
</feature>
<feature type="compositionally biased region" description="Basic and acidic residues" evidence="1">
    <location>
        <begin position="390"/>
        <end position="400"/>
    </location>
</feature>
<feature type="compositionally biased region" description="Basic and acidic residues" evidence="1">
    <location>
        <begin position="425"/>
        <end position="439"/>
    </location>
</feature>
<feature type="compositionally biased region" description="Polar residues" evidence="1">
    <location>
        <begin position="452"/>
        <end position="464"/>
    </location>
</feature>
<proteinExistence type="evidence at protein level"/>
<accession>Q8VE52</accession>
<protein>
    <recommendedName>
        <fullName>Opioid growth factor receptor-like protein 1</fullName>
    </recommendedName>
</protein>
<gene>
    <name type="primary">Ogfrl1</name>
</gene>
<reference key="1">
    <citation type="journal article" date="2009" name="PLoS Biol.">
        <title>Lineage-specific biology revealed by a finished genome assembly of the mouse.</title>
        <authorList>
            <person name="Church D.M."/>
            <person name="Goodstadt L."/>
            <person name="Hillier L.W."/>
            <person name="Zody M.C."/>
            <person name="Goldstein S."/>
            <person name="She X."/>
            <person name="Bult C.J."/>
            <person name="Agarwala R."/>
            <person name="Cherry J.L."/>
            <person name="DiCuccio M."/>
            <person name="Hlavina W."/>
            <person name="Kapustin Y."/>
            <person name="Meric P."/>
            <person name="Maglott D."/>
            <person name="Birtle Z."/>
            <person name="Marques A.C."/>
            <person name="Graves T."/>
            <person name="Zhou S."/>
            <person name="Teague B."/>
            <person name="Potamousis K."/>
            <person name="Churas C."/>
            <person name="Place M."/>
            <person name="Herschleb J."/>
            <person name="Runnheim R."/>
            <person name="Forrest D."/>
            <person name="Amos-Landgraf J."/>
            <person name="Schwartz D.C."/>
            <person name="Cheng Z."/>
            <person name="Lindblad-Toh K."/>
            <person name="Eichler E.E."/>
            <person name="Ponting C.P."/>
        </authorList>
    </citation>
    <scope>NUCLEOTIDE SEQUENCE [LARGE SCALE GENOMIC DNA]</scope>
    <source>
        <strain>C57BL/6J</strain>
    </source>
</reference>
<reference key="2">
    <citation type="journal article" date="2004" name="Genome Res.">
        <title>The status, quality, and expansion of the NIH full-length cDNA project: the Mammalian Gene Collection (MGC).</title>
        <authorList>
            <consortium name="The MGC Project Team"/>
        </authorList>
    </citation>
    <scope>NUCLEOTIDE SEQUENCE [LARGE SCALE MRNA] OF 186-464</scope>
    <source>
        <strain>FVB/N</strain>
        <tissue>Mammary tumor</tissue>
    </source>
</reference>
<reference key="3">
    <citation type="journal article" date="2010" name="Cell">
        <title>A tissue-specific atlas of mouse protein phosphorylation and expression.</title>
        <authorList>
            <person name="Huttlin E.L."/>
            <person name="Jedrychowski M.P."/>
            <person name="Elias J.E."/>
            <person name="Goswami T."/>
            <person name="Rad R."/>
            <person name="Beausoleil S.A."/>
            <person name="Villen J."/>
            <person name="Haas W."/>
            <person name="Sowa M.E."/>
            <person name="Gygi S.P."/>
        </authorList>
    </citation>
    <scope>IDENTIFICATION BY MASS SPECTROMETRY [LARGE SCALE ANALYSIS]</scope>
    <source>
        <tissue>Brain</tissue>
    </source>
</reference>
<sequence length="464" mass="52268">MGNLLGGVSFREPTTVEDCDSTWQTDSEPEPEQPGPAGGGEGQQHDEPEQPKQPPERAGGRPRASPVPEDHAEAAGAEQGGESTEGNAKPKRSFYAARDLYKYRHQYPNFKDIRYQNDLSNLRFYKNKIPFKPDGVYIEEVLNKWKGDYEKLEHNHTYIQWLFPLREQGLNFYAKELTTYEIEEFKKTKEAIRRFLLAYKMMLEFFGIKLIDKTGNVARAGNWQERFQHLNESQHNYLRITRILKSLGELGYESFKSPLVKFILHEALVENTIPNIKQSALEYFVYTIRDRRERRKLLRFAQKHYTPSENFIWGPPKKELPERSKAQKTPTLPASGSNGQTSTHKKSKDSKISPGASHVNSKSVEEKKGASREPGEEADKPSPEPGSGDPKPRNTEKDSAADQSDSPPEKTVPDTAGKGECPTSSEKDGEGEDQSKDSENPENAGCHAEVVAQQNATNPQTSSG</sequence>
<keyword id="KW-1185">Reference proteome</keyword>
<dbReference type="EMBL" id="AC165368">
    <property type="status" value="NOT_ANNOTATED_CDS"/>
    <property type="molecule type" value="Genomic_DNA"/>
</dbReference>
<dbReference type="EMBL" id="BC019747">
    <property type="protein sequence ID" value="AAH19747.1"/>
    <property type="status" value="ALT_INIT"/>
    <property type="molecule type" value="mRNA"/>
</dbReference>
<dbReference type="CCDS" id="CCDS35526.1"/>
<dbReference type="RefSeq" id="NP_001074548.1">
    <property type="nucleotide sequence ID" value="NM_001081079.1"/>
</dbReference>
<dbReference type="BioGRID" id="213891">
    <property type="interactions" value="2"/>
</dbReference>
<dbReference type="FunCoup" id="Q8VE52">
    <property type="interactions" value="20"/>
</dbReference>
<dbReference type="STRING" id="10090.ENSMUSP00000027343"/>
<dbReference type="GlyGen" id="Q8VE52">
    <property type="glycosylation" value="2 sites, 1 O-linked glycan (1 site)"/>
</dbReference>
<dbReference type="iPTMnet" id="Q8VE52"/>
<dbReference type="PhosphoSitePlus" id="Q8VE52"/>
<dbReference type="jPOST" id="Q8VE52"/>
<dbReference type="PaxDb" id="10090-ENSMUSP00000027343"/>
<dbReference type="PeptideAtlas" id="Q8VE52"/>
<dbReference type="ProteomicsDB" id="294167"/>
<dbReference type="Pumba" id="Q8VE52"/>
<dbReference type="Antibodypedia" id="17769">
    <property type="antibodies" value="8 antibodies from 4 providers"/>
</dbReference>
<dbReference type="Ensembl" id="ENSMUST00000027343.6">
    <property type="protein sequence ID" value="ENSMUSP00000027343.6"/>
    <property type="gene ID" value="ENSMUSG00000026158.12"/>
</dbReference>
<dbReference type="GeneID" id="70155"/>
<dbReference type="KEGG" id="mmu:70155"/>
<dbReference type="UCSC" id="uc007amb.1">
    <property type="organism name" value="mouse"/>
</dbReference>
<dbReference type="AGR" id="MGI:1917405"/>
<dbReference type="CTD" id="79627"/>
<dbReference type="MGI" id="MGI:1917405">
    <property type="gene designation" value="Ogfrl1"/>
</dbReference>
<dbReference type="VEuPathDB" id="HostDB:ENSMUSG00000026158"/>
<dbReference type="eggNOG" id="ENOG502RA9J">
    <property type="taxonomic scope" value="Eukaryota"/>
</dbReference>
<dbReference type="GeneTree" id="ENSGT00390000018730"/>
<dbReference type="HOGENOM" id="CLU_032134_3_0_1"/>
<dbReference type="InParanoid" id="Q8VE52"/>
<dbReference type="OMA" id="MHKKPKD"/>
<dbReference type="OrthoDB" id="9030204at2759"/>
<dbReference type="PhylomeDB" id="Q8VE52"/>
<dbReference type="TreeFam" id="TF331377"/>
<dbReference type="BioGRID-ORCS" id="70155">
    <property type="hits" value="3 hits in 75 CRISPR screens"/>
</dbReference>
<dbReference type="ChiTaRS" id="Ogfrl1">
    <property type="organism name" value="mouse"/>
</dbReference>
<dbReference type="PRO" id="PR:Q8VE52"/>
<dbReference type="Proteomes" id="UP000000589">
    <property type="component" value="Chromosome 1"/>
</dbReference>
<dbReference type="RNAct" id="Q8VE52">
    <property type="molecule type" value="protein"/>
</dbReference>
<dbReference type="Bgee" id="ENSMUSG00000026158">
    <property type="expression patterns" value="Expressed in medial dorsal nucleus of thalamus and 251 other cell types or tissues"/>
</dbReference>
<dbReference type="ExpressionAtlas" id="Q8VE52">
    <property type="expression patterns" value="baseline and differential"/>
</dbReference>
<dbReference type="GO" id="GO:0016020">
    <property type="term" value="C:membrane"/>
    <property type="evidence" value="ECO:0007669"/>
    <property type="project" value="InterPro"/>
</dbReference>
<dbReference type="GO" id="GO:0140625">
    <property type="term" value="F:opioid growth factor receptor activity"/>
    <property type="evidence" value="ECO:0007669"/>
    <property type="project" value="InterPro"/>
</dbReference>
<dbReference type="InterPro" id="IPR006757">
    <property type="entry name" value="OGF_rcpt"/>
</dbReference>
<dbReference type="InterPro" id="IPR039574">
    <property type="entry name" value="OGFr"/>
</dbReference>
<dbReference type="PANTHER" id="PTHR14015">
    <property type="entry name" value="OPIOID GROWTH FACTOR RECEPTOR OGFR ZETA-TYPE OPIOID RECEPTOR"/>
    <property type="match status" value="1"/>
</dbReference>
<dbReference type="PANTHER" id="PTHR14015:SF0">
    <property type="entry name" value="OPIOID GROWTH FACTOR RECEPTOR-LIKE PROTEIN 1"/>
    <property type="match status" value="1"/>
</dbReference>
<dbReference type="Pfam" id="PF04664">
    <property type="entry name" value="OGFr_N"/>
    <property type="match status" value="1"/>
</dbReference>